<accession>D1MF76</accession>
<name>CDO_ARTBE</name>
<gene>
    <name evidence="1" type="primary">CDO1</name>
</gene>
<protein>
    <recommendedName>
        <fullName evidence="4">Cysteine dioxygenase</fullName>
        <shortName evidence="4">CDO</shortName>
        <ecNumber evidence="3">1.13.11.20</ecNumber>
    </recommendedName>
</protein>
<organism>
    <name type="scientific">Arthroderma benhamiae</name>
    <name type="common">Trichophyton mentagrophytes</name>
    <dbReference type="NCBI Taxonomy" id="63400"/>
    <lineage>
        <taxon>Eukaryota</taxon>
        <taxon>Fungi</taxon>
        <taxon>Dikarya</taxon>
        <taxon>Ascomycota</taxon>
        <taxon>Pezizomycotina</taxon>
        <taxon>Eurotiomycetes</taxon>
        <taxon>Eurotiomycetidae</taxon>
        <taxon>Onygenales</taxon>
        <taxon>Arthrodermataceae</taxon>
        <taxon>Trichophyton</taxon>
    </lineage>
</organism>
<evidence type="ECO:0000250" key="1">
    <source>
        <dbReference type="UniProtKB" id="D4AN26"/>
    </source>
</evidence>
<evidence type="ECO:0000250" key="2">
    <source>
        <dbReference type="UniProtKB" id="Q16878"/>
    </source>
</evidence>
<evidence type="ECO:0000269" key="3">
    <source>
    </source>
</evidence>
<evidence type="ECO:0000303" key="4">
    <source>
    </source>
</evidence>
<evidence type="ECO:0000305" key="5"/>
<proteinExistence type="evidence at protein level"/>
<dbReference type="EC" id="1.13.11.20" evidence="3"/>
<dbReference type="EMBL" id="GU139238">
    <property type="protein sequence ID" value="ACZ26339.1"/>
    <property type="molecule type" value="mRNA"/>
</dbReference>
<dbReference type="SMR" id="D1MF76"/>
<dbReference type="GO" id="GO:0017172">
    <property type="term" value="F:cysteine dioxygenase activity"/>
    <property type="evidence" value="ECO:0007669"/>
    <property type="project" value="UniProtKB-EC"/>
</dbReference>
<dbReference type="GO" id="GO:0008198">
    <property type="term" value="F:ferrous iron binding"/>
    <property type="evidence" value="ECO:0007669"/>
    <property type="project" value="TreeGrafter"/>
</dbReference>
<dbReference type="GO" id="GO:0019448">
    <property type="term" value="P:L-cysteine catabolic process"/>
    <property type="evidence" value="ECO:0007669"/>
    <property type="project" value="TreeGrafter"/>
</dbReference>
<dbReference type="CDD" id="cd10548">
    <property type="entry name" value="cupin_CDO"/>
    <property type="match status" value="1"/>
</dbReference>
<dbReference type="FunFam" id="2.60.120.10:FF:000189">
    <property type="entry name" value="Cysteine dioxygenase"/>
    <property type="match status" value="1"/>
</dbReference>
<dbReference type="Gene3D" id="2.60.120.10">
    <property type="entry name" value="Jelly Rolls"/>
    <property type="match status" value="1"/>
</dbReference>
<dbReference type="InterPro" id="IPR010300">
    <property type="entry name" value="CDO_1"/>
</dbReference>
<dbReference type="InterPro" id="IPR014710">
    <property type="entry name" value="RmlC-like_jellyroll"/>
</dbReference>
<dbReference type="InterPro" id="IPR011051">
    <property type="entry name" value="RmlC_Cupin_sf"/>
</dbReference>
<dbReference type="PANTHER" id="PTHR12918">
    <property type="entry name" value="CYSTEINE DIOXYGENASE"/>
    <property type="match status" value="1"/>
</dbReference>
<dbReference type="PANTHER" id="PTHR12918:SF1">
    <property type="entry name" value="CYSTEINE DIOXYGENASE TYPE 1"/>
    <property type="match status" value="1"/>
</dbReference>
<dbReference type="Pfam" id="PF05995">
    <property type="entry name" value="CDO_I"/>
    <property type="match status" value="1"/>
</dbReference>
<dbReference type="SUPFAM" id="SSF51182">
    <property type="entry name" value="RmlC-like cupins"/>
    <property type="match status" value="1"/>
</dbReference>
<comment type="function">
    <text evidence="3">Cysteine dioxygenase involved in sulfite formation from cysteine. Required for keratin degradation and plays an important role in filamentous growth and virulence.</text>
</comment>
<comment type="catalytic activity">
    <reaction evidence="3">
        <text>L-cysteine + O2 = 3-sulfino-L-alanine + H(+)</text>
        <dbReference type="Rhea" id="RHEA:20441"/>
        <dbReference type="ChEBI" id="CHEBI:15378"/>
        <dbReference type="ChEBI" id="CHEBI:15379"/>
        <dbReference type="ChEBI" id="CHEBI:35235"/>
        <dbReference type="ChEBI" id="CHEBI:61085"/>
        <dbReference type="EC" id="1.13.11.20"/>
    </reaction>
</comment>
<comment type="cofactor">
    <cofactor evidence="2">
        <name>Fe cation</name>
        <dbReference type="ChEBI" id="CHEBI:24875"/>
    </cofactor>
    <text evidence="2">Binds 1 Fe cation per subunit.</text>
</comment>
<comment type="PTM">
    <text evidence="2">The thioether cross-link between Cys-113 and Tyr-183 plays a structural role through stabilizing the Fe(2+) ion, and prevents the production of highly damaging free hydroxyl radicals by holding the oxygen radical via hydroxyl hydrogen.</text>
</comment>
<comment type="similarity">
    <text evidence="5">Belongs to the cysteine dioxygenase family.</text>
</comment>
<feature type="chain" id="PRO_0000432124" description="Cysteine dioxygenase">
    <location>
        <begin position="1"/>
        <end position="219"/>
    </location>
</feature>
<feature type="binding site" evidence="2">
    <location>
        <position position="106"/>
    </location>
    <ligand>
        <name>Fe cation</name>
        <dbReference type="ChEBI" id="CHEBI:24875"/>
        <note>catalytic</note>
    </ligand>
</feature>
<feature type="binding site" evidence="2">
    <location>
        <position position="108"/>
    </location>
    <ligand>
        <name>Fe cation</name>
        <dbReference type="ChEBI" id="CHEBI:24875"/>
        <note>catalytic</note>
    </ligand>
</feature>
<feature type="binding site" evidence="2">
    <location>
        <position position="166"/>
    </location>
    <ligand>
        <name>Fe cation</name>
        <dbReference type="ChEBI" id="CHEBI:24875"/>
        <note>catalytic</note>
    </ligand>
</feature>
<feature type="cross-link" description="3'-(S-cysteinyl)-tyrosine (Cys-Tyr)" evidence="2">
    <location>
        <begin position="113"/>
        <end position="183"/>
    </location>
</feature>
<reference key="1">
    <citation type="journal article" date="2011" name="Mycoses">
        <title>Isolation of recombinant cysteine dioxygenase protein from Trichophyton mentagrophytes.</title>
        <authorList>
            <person name="Kasperova A."/>
            <person name="Kunert J."/>
            <person name="Horynova M."/>
            <person name="Weigl E."/>
            <person name="Sebela M."/>
            <person name="Lenobel R."/>
            <person name="Raska M."/>
        </authorList>
    </citation>
    <scope>NUCLEOTIDE SEQUENCE [MRNA]</scope>
    <scope>IDENTIFICATION BY MASS SPECTROMETRY</scope>
    <scope>CATALYTIC ACTIVITY</scope>
    <scope>FUNCTION</scope>
    <source>
        <strain>TM-10</strain>
    </source>
</reference>
<keyword id="KW-0223">Dioxygenase</keyword>
<keyword id="KW-0408">Iron</keyword>
<keyword id="KW-0479">Metal-binding</keyword>
<keyword id="KW-0560">Oxidoreductase</keyword>
<keyword id="KW-0883">Thioether bond</keyword>
<keyword id="KW-0843">Virulence</keyword>
<sequence>MPFIENQTTTAEPIVPVDVKGKDAFHKLVDDLSAVLGPSSGLDSDDVDPMDIQKLMEGYVSNHEEWQRYALADESRAYTRNLVDEGNGKSNLLVLVWNPGKSSPIHDHANAHCVMKILHGSLKEHRYDWPEQDKINNGEACPLTVTKETILRENEVAYMSDKLGLHKISNPDPNDFAISLHLYTPPNAAHFGCSLFDEKTGKSHHIKQCTFFSNRGLKL</sequence>